<evidence type="ECO:0000255" key="1">
    <source>
        <dbReference type="HAMAP-Rule" id="MF_00367"/>
    </source>
</evidence>
<evidence type="ECO:0000255" key="2">
    <source>
        <dbReference type="PROSITE-ProRule" id="PRU01050"/>
    </source>
</evidence>
<gene>
    <name evidence="1" type="primary">era</name>
    <name type="ordered locus">SPH_1070</name>
</gene>
<protein>
    <recommendedName>
        <fullName evidence="1">GTPase Era</fullName>
    </recommendedName>
</protein>
<reference key="1">
    <citation type="journal article" date="2010" name="Genome Biol.">
        <title>Structure and dynamics of the pan-genome of Streptococcus pneumoniae and closely related species.</title>
        <authorList>
            <person name="Donati C."/>
            <person name="Hiller N.L."/>
            <person name="Tettelin H."/>
            <person name="Muzzi A."/>
            <person name="Croucher N.J."/>
            <person name="Angiuoli S.V."/>
            <person name="Oggioni M."/>
            <person name="Dunning Hotopp J.C."/>
            <person name="Hu F.Z."/>
            <person name="Riley D.R."/>
            <person name="Covacci A."/>
            <person name="Mitchell T.J."/>
            <person name="Bentley S.D."/>
            <person name="Kilian M."/>
            <person name="Ehrlich G.D."/>
            <person name="Rappuoli R."/>
            <person name="Moxon E.R."/>
            <person name="Masignani V."/>
        </authorList>
    </citation>
    <scope>NUCLEOTIDE SEQUENCE [LARGE SCALE GENOMIC DNA]</scope>
    <source>
        <strain>Hungary19A-6</strain>
    </source>
</reference>
<accession>B1IBC9</accession>
<name>ERA_STRPI</name>
<dbReference type="EMBL" id="CP000936">
    <property type="protein sequence ID" value="ACA37408.1"/>
    <property type="molecule type" value="Genomic_DNA"/>
</dbReference>
<dbReference type="RefSeq" id="WP_000143264.1">
    <property type="nucleotide sequence ID" value="NC_010380.1"/>
</dbReference>
<dbReference type="SMR" id="B1IBC9"/>
<dbReference type="GeneID" id="93739768"/>
<dbReference type="KEGG" id="spv:SPH_1070"/>
<dbReference type="HOGENOM" id="CLU_038009_1_0_9"/>
<dbReference type="Proteomes" id="UP000002163">
    <property type="component" value="Chromosome"/>
</dbReference>
<dbReference type="GO" id="GO:0005829">
    <property type="term" value="C:cytosol"/>
    <property type="evidence" value="ECO:0007669"/>
    <property type="project" value="TreeGrafter"/>
</dbReference>
<dbReference type="GO" id="GO:0005886">
    <property type="term" value="C:plasma membrane"/>
    <property type="evidence" value="ECO:0007669"/>
    <property type="project" value="UniProtKB-SubCell"/>
</dbReference>
<dbReference type="GO" id="GO:0005525">
    <property type="term" value="F:GTP binding"/>
    <property type="evidence" value="ECO:0007669"/>
    <property type="project" value="UniProtKB-UniRule"/>
</dbReference>
<dbReference type="GO" id="GO:0003924">
    <property type="term" value="F:GTPase activity"/>
    <property type="evidence" value="ECO:0007669"/>
    <property type="project" value="UniProtKB-UniRule"/>
</dbReference>
<dbReference type="GO" id="GO:0043024">
    <property type="term" value="F:ribosomal small subunit binding"/>
    <property type="evidence" value="ECO:0007669"/>
    <property type="project" value="TreeGrafter"/>
</dbReference>
<dbReference type="GO" id="GO:0070181">
    <property type="term" value="F:small ribosomal subunit rRNA binding"/>
    <property type="evidence" value="ECO:0007669"/>
    <property type="project" value="UniProtKB-UniRule"/>
</dbReference>
<dbReference type="GO" id="GO:0000028">
    <property type="term" value="P:ribosomal small subunit assembly"/>
    <property type="evidence" value="ECO:0007669"/>
    <property type="project" value="TreeGrafter"/>
</dbReference>
<dbReference type="CDD" id="cd04163">
    <property type="entry name" value="Era"/>
    <property type="match status" value="1"/>
</dbReference>
<dbReference type="CDD" id="cd22534">
    <property type="entry name" value="KH-II_Era"/>
    <property type="match status" value="1"/>
</dbReference>
<dbReference type="FunFam" id="3.30.300.20:FF:000003">
    <property type="entry name" value="GTPase Era"/>
    <property type="match status" value="1"/>
</dbReference>
<dbReference type="FunFam" id="3.40.50.300:FF:000094">
    <property type="entry name" value="GTPase Era"/>
    <property type="match status" value="1"/>
</dbReference>
<dbReference type="Gene3D" id="3.30.300.20">
    <property type="match status" value="1"/>
</dbReference>
<dbReference type="Gene3D" id="3.40.50.300">
    <property type="entry name" value="P-loop containing nucleotide triphosphate hydrolases"/>
    <property type="match status" value="1"/>
</dbReference>
<dbReference type="HAMAP" id="MF_00367">
    <property type="entry name" value="GTPase_Era"/>
    <property type="match status" value="1"/>
</dbReference>
<dbReference type="InterPro" id="IPR030388">
    <property type="entry name" value="G_ERA_dom"/>
</dbReference>
<dbReference type="InterPro" id="IPR006073">
    <property type="entry name" value="GTP-bd"/>
</dbReference>
<dbReference type="InterPro" id="IPR005662">
    <property type="entry name" value="GTPase_Era-like"/>
</dbReference>
<dbReference type="InterPro" id="IPR015946">
    <property type="entry name" value="KH_dom-like_a/b"/>
</dbReference>
<dbReference type="InterPro" id="IPR004044">
    <property type="entry name" value="KH_dom_type_2"/>
</dbReference>
<dbReference type="InterPro" id="IPR009019">
    <property type="entry name" value="KH_sf_prok-type"/>
</dbReference>
<dbReference type="InterPro" id="IPR027417">
    <property type="entry name" value="P-loop_NTPase"/>
</dbReference>
<dbReference type="InterPro" id="IPR005225">
    <property type="entry name" value="Small_GTP-bd"/>
</dbReference>
<dbReference type="NCBIfam" id="TIGR00436">
    <property type="entry name" value="era"/>
    <property type="match status" value="1"/>
</dbReference>
<dbReference type="NCBIfam" id="NF000908">
    <property type="entry name" value="PRK00089.1"/>
    <property type="match status" value="1"/>
</dbReference>
<dbReference type="NCBIfam" id="TIGR00231">
    <property type="entry name" value="small_GTP"/>
    <property type="match status" value="1"/>
</dbReference>
<dbReference type="PANTHER" id="PTHR42698">
    <property type="entry name" value="GTPASE ERA"/>
    <property type="match status" value="1"/>
</dbReference>
<dbReference type="PANTHER" id="PTHR42698:SF1">
    <property type="entry name" value="GTPASE ERA, MITOCHONDRIAL"/>
    <property type="match status" value="1"/>
</dbReference>
<dbReference type="Pfam" id="PF07650">
    <property type="entry name" value="KH_2"/>
    <property type="match status" value="1"/>
</dbReference>
<dbReference type="Pfam" id="PF01926">
    <property type="entry name" value="MMR_HSR1"/>
    <property type="match status" value="1"/>
</dbReference>
<dbReference type="SUPFAM" id="SSF52540">
    <property type="entry name" value="P-loop containing nucleoside triphosphate hydrolases"/>
    <property type="match status" value="1"/>
</dbReference>
<dbReference type="SUPFAM" id="SSF54814">
    <property type="entry name" value="Prokaryotic type KH domain (KH-domain type II)"/>
    <property type="match status" value="1"/>
</dbReference>
<dbReference type="PROSITE" id="PS51713">
    <property type="entry name" value="G_ERA"/>
    <property type="match status" value="1"/>
</dbReference>
<dbReference type="PROSITE" id="PS50823">
    <property type="entry name" value="KH_TYPE_2"/>
    <property type="match status" value="1"/>
</dbReference>
<keyword id="KW-1003">Cell membrane</keyword>
<keyword id="KW-0963">Cytoplasm</keyword>
<keyword id="KW-0342">GTP-binding</keyword>
<keyword id="KW-0472">Membrane</keyword>
<keyword id="KW-0547">Nucleotide-binding</keyword>
<keyword id="KW-0690">Ribosome biogenesis</keyword>
<keyword id="KW-0694">RNA-binding</keyword>
<keyword id="KW-0699">rRNA-binding</keyword>
<feature type="chain" id="PRO_1000121360" description="GTPase Era">
    <location>
        <begin position="1"/>
        <end position="299"/>
    </location>
</feature>
<feature type="domain" description="Era-type G" evidence="2">
    <location>
        <begin position="4"/>
        <end position="171"/>
    </location>
</feature>
<feature type="domain" description="KH type-2" evidence="1">
    <location>
        <begin position="202"/>
        <end position="280"/>
    </location>
</feature>
<feature type="region of interest" description="G1" evidence="2">
    <location>
        <begin position="12"/>
        <end position="19"/>
    </location>
</feature>
<feature type="region of interest" description="G2" evidence="2">
    <location>
        <begin position="38"/>
        <end position="42"/>
    </location>
</feature>
<feature type="region of interest" description="G3" evidence="2">
    <location>
        <begin position="59"/>
        <end position="62"/>
    </location>
</feature>
<feature type="region of interest" description="G4" evidence="2">
    <location>
        <begin position="121"/>
        <end position="124"/>
    </location>
</feature>
<feature type="region of interest" description="G5" evidence="2">
    <location>
        <begin position="150"/>
        <end position="152"/>
    </location>
</feature>
<feature type="binding site" evidence="1">
    <location>
        <begin position="12"/>
        <end position="19"/>
    </location>
    <ligand>
        <name>GTP</name>
        <dbReference type="ChEBI" id="CHEBI:37565"/>
    </ligand>
</feature>
<feature type="binding site" evidence="1">
    <location>
        <begin position="59"/>
        <end position="63"/>
    </location>
    <ligand>
        <name>GTP</name>
        <dbReference type="ChEBI" id="CHEBI:37565"/>
    </ligand>
</feature>
<feature type="binding site" evidence="1">
    <location>
        <begin position="121"/>
        <end position="124"/>
    </location>
    <ligand>
        <name>GTP</name>
        <dbReference type="ChEBI" id="CHEBI:37565"/>
    </ligand>
</feature>
<sequence>MTFKSGFVAILGRPNVGKSTFLNHVMGQKIAIMSDKAQTTRNKIMGIYTTDKEQIVFIDTPGIHKPKTALGDFMVESAYSTLREVDTVLFMVPADEARGKGDDMIIERLKAAKVPVILVVNKIDKVHPDQLLSQIDDFRNQMDFKEIVPISALQGNNVSRLVDILSENLDEGFQYFPSDQITDHPERFLVSEMVREKVLHLTREEIPHSVAVVVDSMKRDEETDKVHIRATIMVERDSQKGIIIGKGGAMLKKIGSMARRDIELMLGDKVFLETWVKVKKNWRDKKLDLADFGYNEKEY</sequence>
<organism>
    <name type="scientific">Streptococcus pneumoniae (strain Hungary19A-6)</name>
    <dbReference type="NCBI Taxonomy" id="487214"/>
    <lineage>
        <taxon>Bacteria</taxon>
        <taxon>Bacillati</taxon>
        <taxon>Bacillota</taxon>
        <taxon>Bacilli</taxon>
        <taxon>Lactobacillales</taxon>
        <taxon>Streptococcaceae</taxon>
        <taxon>Streptococcus</taxon>
    </lineage>
</organism>
<comment type="function">
    <text evidence="1">An essential GTPase that binds both GDP and GTP, with rapid nucleotide exchange. Plays a role in 16S rRNA processing and 30S ribosomal subunit biogenesis and possibly also in cell cycle regulation and energy metabolism.</text>
</comment>
<comment type="subunit">
    <text evidence="1">Monomer.</text>
</comment>
<comment type="subcellular location">
    <subcellularLocation>
        <location>Cytoplasm</location>
    </subcellularLocation>
    <subcellularLocation>
        <location evidence="1">Cell membrane</location>
        <topology evidence="1">Peripheral membrane protein</topology>
    </subcellularLocation>
</comment>
<comment type="similarity">
    <text evidence="1 2">Belongs to the TRAFAC class TrmE-Era-EngA-EngB-Septin-like GTPase superfamily. Era GTPase family.</text>
</comment>
<proteinExistence type="inferred from homology"/>